<dbReference type="EMBL" id="CU928164">
    <property type="protein sequence ID" value="CAR20267.1"/>
    <property type="molecule type" value="Genomic_DNA"/>
</dbReference>
<dbReference type="RefSeq" id="WP_000818598.1">
    <property type="nucleotide sequence ID" value="NC_011750.1"/>
</dbReference>
<dbReference type="RefSeq" id="YP_002410036.1">
    <property type="nucleotide sequence ID" value="NC_011750.1"/>
</dbReference>
<dbReference type="SMR" id="B7NQ02"/>
<dbReference type="STRING" id="585057.ECIAI39_4159"/>
<dbReference type="KEGG" id="ect:ECIAI39_4159"/>
<dbReference type="PATRIC" id="fig|585057.6.peg.4310"/>
<dbReference type="HOGENOM" id="CLU_069356_5_0_6"/>
<dbReference type="Proteomes" id="UP000000749">
    <property type="component" value="Chromosome"/>
</dbReference>
<dbReference type="GO" id="GO:0043590">
    <property type="term" value="C:bacterial nucleoid"/>
    <property type="evidence" value="ECO:0007669"/>
    <property type="project" value="UniProtKB-UniRule"/>
</dbReference>
<dbReference type="GO" id="GO:0005737">
    <property type="term" value="C:cytoplasm"/>
    <property type="evidence" value="ECO:0007669"/>
    <property type="project" value="UniProtKB-UniRule"/>
</dbReference>
<dbReference type="GO" id="GO:0003700">
    <property type="term" value="F:DNA-binding transcription factor activity"/>
    <property type="evidence" value="ECO:0007669"/>
    <property type="project" value="TreeGrafter"/>
</dbReference>
<dbReference type="GO" id="GO:0000976">
    <property type="term" value="F:transcription cis-regulatory region binding"/>
    <property type="evidence" value="ECO:0007669"/>
    <property type="project" value="TreeGrafter"/>
</dbReference>
<dbReference type="GO" id="GO:0051301">
    <property type="term" value="P:cell division"/>
    <property type="evidence" value="ECO:0007669"/>
    <property type="project" value="UniProtKB-KW"/>
</dbReference>
<dbReference type="GO" id="GO:0010974">
    <property type="term" value="P:negative regulation of division septum assembly"/>
    <property type="evidence" value="ECO:0007669"/>
    <property type="project" value="InterPro"/>
</dbReference>
<dbReference type="FunFam" id="1.10.357.10:FF:000002">
    <property type="entry name" value="Nucleoid occlusion factor SlmA"/>
    <property type="match status" value="1"/>
</dbReference>
<dbReference type="Gene3D" id="1.10.357.10">
    <property type="entry name" value="Tetracycline Repressor, domain 2"/>
    <property type="match status" value="1"/>
</dbReference>
<dbReference type="HAMAP" id="MF_01839">
    <property type="entry name" value="NO_factor_SlmA"/>
    <property type="match status" value="1"/>
</dbReference>
<dbReference type="InterPro" id="IPR023772">
    <property type="entry name" value="DNA-bd_HTH_TetR-type_CS"/>
</dbReference>
<dbReference type="InterPro" id="IPR009057">
    <property type="entry name" value="Homeodomain-like_sf"/>
</dbReference>
<dbReference type="InterPro" id="IPR050109">
    <property type="entry name" value="HTH-type_TetR-like_transc_reg"/>
</dbReference>
<dbReference type="InterPro" id="IPR001647">
    <property type="entry name" value="HTH_TetR"/>
</dbReference>
<dbReference type="InterPro" id="IPR023769">
    <property type="entry name" value="NO_SlmA"/>
</dbReference>
<dbReference type="InterPro" id="IPR054580">
    <property type="entry name" value="SlmA-like_C"/>
</dbReference>
<dbReference type="InterPro" id="IPR036271">
    <property type="entry name" value="Tet_transcr_reg_TetR-rel_C_sf"/>
</dbReference>
<dbReference type="NCBIfam" id="NF007015">
    <property type="entry name" value="PRK09480.1"/>
    <property type="match status" value="1"/>
</dbReference>
<dbReference type="PANTHER" id="PTHR30055">
    <property type="entry name" value="HTH-TYPE TRANSCRIPTIONAL REGULATOR RUTR"/>
    <property type="match status" value="1"/>
</dbReference>
<dbReference type="PANTHER" id="PTHR30055:SF183">
    <property type="entry name" value="NUCLEOID OCCLUSION FACTOR SLMA"/>
    <property type="match status" value="1"/>
</dbReference>
<dbReference type="Pfam" id="PF22276">
    <property type="entry name" value="SlmA-like_C"/>
    <property type="match status" value="1"/>
</dbReference>
<dbReference type="Pfam" id="PF00440">
    <property type="entry name" value="TetR_N"/>
    <property type="match status" value="1"/>
</dbReference>
<dbReference type="SUPFAM" id="SSF46689">
    <property type="entry name" value="Homeodomain-like"/>
    <property type="match status" value="1"/>
</dbReference>
<dbReference type="SUPFAM" id="SSF48498">
    <property type="entry name" value="Tetracyclin repressor-like, C-terminal domain"/>
    <property type="match status" value="1"/>
</dbReference>
<dbReference type="PROSITE" id="PS01081">
    <property type="entry name" value="HTH_TETR_1"/>
    <property type="match status" value="1"/>
</dbReference>
<dbReference type="PROSITE" id="PS50977">
    <property type="entry name" value="HTH_TETR_2"/>
    <property type="match status" value="1"/>
</dbReference>
<gene>
    <name evidence="1" type="primary">slmA</name>
    <name type="ordered locus">ECIAI39_4159</name>
</gene>
<name>SLMA_ECO7I</name>
<sequence>MAEKQTAKRNRREEILQSLALMLESSDGSQRITTAKLAASVGVSEAALYRHFPSKTRMFDSLIEFIEDSLITRINLILKDEKDTTARLRLIVLLLLGFGERNPGLTRILTGHALMFEQDRLQGRINQLFERIEAQLRQVLREKRMREGEGYATDETLLASQILAFCEGMLSRFVRSEFKYRPTDDFDARWPLIAAQLQ</sequence>
<evidence type="ECO:0000255" key="1">
    <source>
        <dbReference type="HAMAP-Rule" id="MF_01839"/>
    </source>
</evidence>
<comment type="function">
    <text evidence="1">Required for nucleoid occlusion (NO) phenomenon, which prevents Z-ring formation and cell division over the nucleoid. Acts as a DNA-associated cell division inhibitor that binds simultaneously chromosomal DNA and FtsZ, and disrupts the assembly of FtsZ polymers. SlmA-DNA-binding sequences (SBS) are dispersed on non-Ter regions of the chromosome, preventing FtsZ polymerization at these regions.</text>
</comment>
<comment type="subunit">
    <text evidence="1">Homodimer. Interacts with FtsZ.</text>
</comment>
<comment type="subcellular location">
    <subcellularLocation>
        <location evidence="1">Cytoplasm</location>
        <location evidence="1">Nucleoid</location>
    </subcellularLocation>
</comment>
<comment type="similarity">
    <text evidence="1">Belongs to the nucleoid occlusion factor SlmA family.</text>
</comment>
<accession>B7NQ02</accession>
<feature type="chain" id="PRO_1000188382" description="Nucleoid occlusion factor SlmA">
    <location>
        <begin position="1"/>
        <end position="198"/>
    </location>
</feature>
<feature type="domain" description="HTH tetR-type" evidence="1">
    <location>
        <begin position="10"/>
        <end position="70"/>
    </location>
</feature>
<feature type="DNA-binding region" description="H-T-H motif" evidence="1">
    <location>
        <begin position="33"/>
        <end position="52"/>
    </location>
</feature>
<feature type="coiled-coil region" evidence="1">
    <location>
        <begin position="117"/>
        <end position="144"/>
    </location>
</feature>
<organism>
    <name type="scientific">Escherichia coli O7:K1 (strain IAI39 / ExPEC)</name>
    <dbReference type="NCBI Taxonomy" id="585057"/>
    <lineage>
        <taxon>Bacteria</taxon>
        <taxon>Pseudomonadati</taxon>
        <taxon>Pseudomonadota</taxon>
        <taxon>Gammaproteobacteria</taxon>
        <taxon>Enterobacterales</taxon>
        <taxon>Enterobacteriaceae</taxon>
        <taxon>Escherichia</taxon>
    </lineage>
</organism>
<keyword id="KW-0131">Cell cycle</keyword>
<keyword id="KW-0132">Cell division</keyword>
<keyword id="KW-0175">Coiled coil</keyword>
<keyword id="KW-0963">Cytoplasm</keyword>
<keyword id="KW-0238">DNA-binding</keyword>
<reference key="1">
    <citation type="journal article" date="2009" name="PLoS Genet.">
        <title>Organised genome dynamics in the Escherichia coli species results in highly diverse adaptive paths.</title>
        <authorList>
            <person name="Touchon M."/>
            <person name="Hoede C."/>
            <person name="Tenaillon O."/>
            <person name="Barbe V."/>
            <person name="Baeriswyl S."/>
            <person name="Bidet P."/>
            <person name="Bingen E."/>
            <person name="Bonacorsi S."/>
            <person name="Bouchier C."/>
            <person name="Bouvet O."/>
            <person name="Calteau A."/>
            <person name="Chiapello H."/>
            <person name="Clermont O."/>
            <person name="Cruveiller S."/>
            <person name="Danchin A."/>
            <person name="Diard M."/>
            <person name="Dossat C."/>
            <person name="Karoui M.E."/>
            <person name="Frapy E."/>
            <person name="Garry L."/>
            <person name="Ghigo J.M."/>
            <person name="Gilles A.M."/>
            <person name="Johnson J."/>
            <person name="Le Bouguenec C."/>
            <person name="Lescat M."/>
            <person name="Mangenot S."/>
            <person name="Martinez-Jehanne V."/>
            <person name="Matic I."/>
            <person name="Nassif X."/>
            <person name="Oztas S."/>
            <person name="Petit M.A."/>
            <person name="Pichon C."/>
            <person name="Rouy Z."/>
            <person name="Ruf C.S."/>
            <person name="Schneider D."/>
            <person name="Tourret J."/>
            <person name="Vacherie B."/>
            <person name="Vallenet D."/>
            <person name="Medigue C."/>
            <person name="Rocha E.P.C."/>
            <person name="Denamur E."/>
        </authorList>
    </citation>
    <scope>NUCLEOTIDE SEQUENCE [LARGE SCALE GENOMIC DNA]</scope>
    <source>
        <strain>IAI39 / ExPEC</strain>
    </source>
</reference>
<proteinExistence type="inferred from homology"/>
<protein>
    <recommendedName>
        <fullName evidence="1">Nucleoid occlusion factor SlmA</fullName>
    </recommendedName>
</protein>